<organism>
    <name type="scientific">Arabidopsis thaliana</name>
    <name type="common">Mouse-ear cress</name>
    <dbReference type="NCBI Taxonomy" id="3702"/>
    <lineage>
        <taxon>Eukaryota</taxon>
        <taxon>Viridiplantae</taxon>
        <taxon>Streptophyta</taxon>
        <taxon>Embryophyta</taxon>
        <taxon>Tracheophyta</taxon>
        <taxon>Spermatophyta</taxon>
        <taxon>Magnoliopsida</taxon>
        <taxon>eudicotyledons</taxon>
        <taxon>Gunneridae</taxon>
        <taxon>Pentapetalae</taxon>
        <taxon>rosids</taxon>
        <taxon>malvids</taxon>
        <taxon>Brassicales</taxon>
        <taxon>Brassicaceae</taxon>
        <taxon>Camelineae</taxon>
        <taxon>Arabidopsis</taxon>
    </lineage>
</organism>
<keyword id="KW-0067">ATP-binding</keyword>
<keyword id="KW-0418">Kinase</keyword>
<keyword id="KW-0496">Mitochondrion</keyword>
<keyword id="KW-0547">Nucleotide-binding</keyword>
<keyword id="KW-0597">Phosphoprotein</keyword>
<keyword id="KW-0670">Pyruvate</keyword>
<keyword id="KW-1185">Reference proteome</keyword>
<keyword id="KW-0808">Transferase</keyword>
<evidence type="ECO:0000250" key="1"/>
<evidence type="ECO:0000255" key="2">
    <source>
        <dbReference type="PROSITE-ProRule" id="PRU00107"/>
    </source>
</evidence>
<evidence type="ECO:0000269" key="3">
    <source>
    </source>
</evidence>
<evidence type="ECO:0000269" key="4">
    <source>
    </source>
</evidence>
<evidence type="ECO:0000269" key="5">
    <source>
    </source>
</evidence>
<evidence type="ECO:0000269" key="6">
    <source>
    </source>
</evidence>
<evidence type="ECO:0000269" key="7">
    <source>
    </source>
</evidence>
<evidence type="ECO:0000269" key="8">
    <source>
    </source>
</evidence>
<evidence type="ECO:0000305" key="9"/>
<protein>
    <recommendedName>
        <fullName>[Pyruvate dehydrogenase (acetyl-transferring)] kinase, mitochondrial</fullName>
        <shortName>AtPDHK</shortName>
        <shortName>Pyruvate dehydrogenase kinase</shortName>
        <ecNumber>2.7.11.2</ecNumber>
    </recommendedName>
</protein>
<sequence length="366" mass="41447">MAVKKACEMFPKSLIEDVHKWGCMKQTGVSLRYMMEFGSKPTERNLLISAQFLHKELPIRVARRAIELQTLPYGLSDKPAVLKVRDWYLESFRDMRAFPEIKDSGDEKDFTQMIKAVKVRHNNVVPMMALGVNQLKKGMNSGNLDEIHQFLDRFYLSRIGIRMLIGQHVELHNPNPPLHTVGYIHTKMSPMEVARNASEDARSICFREYGSAPEINIYGDPSFTFPYVPTHLHLMMYELVKNSLRAVQERFVDSDRVAPPIRIIVADGIEDVTIKVSDEGGGIARSGLPRIFTYLYSTARNPLEEDVDLGIADVPVTMAGYGYGLPISRLYARYFGGDLQIISMEGYGTDAYLHLSRLGDSQEPLP</sequence>
<reference key="1">
    <citation type="online journal article" date="1998" name="Plant Gene Register">
        <title>Nucleotide and deduced amino acid sequences of the pyruvate dehydrogenase kinase from Arabidopsis thaliana.</title>
        <authorList>
            <person name="Thelen J.J."/>
            <person name="Miernyk J.A."/>
            <person name="Randall D.D."/>
        </authorList>
        <locator>PGR98-192</locator>
    </citation>
    <scope>NUCLEOTIDE SEQUENCE [MRNA]</scope>
    <source>
        <strain>cv. Columbia</strain>
    </source>
</reference>
<reference key="2">
    <citation type="journal article" date="1999" name="Plant Mol. Biol.">
        <title>Effects of antisense repression of an Arabidopsis thaliana pyruvate dehydrogenase kinase cDNA on plant development.</title>
        <authorList>
            <person name="Zou J."/>
            <person name="Qi Q."/>
            <person name="Katavic V."/>
            <person name="Marillia E.-F."/>
            <person name="Taylor D.C."/>
        </authorList>
    </citation>
    <scope>NUCLEOTIDE SEQUENCE [MRNA]</scope>
    <scope>FUNCTION</scope>
    <scope>CATALYTIC ACTIVITY</scope>
    <scope>DISRUPTION PHENOTYPE</scope>
    <scope>TISSUE SPECIFICITY</scope>
    <source>
        <strain>cv. Columbia</strain>
    </source>
</reference>
<reference key="3">
    <citation type="journal article" date="2000" name="Nature">
        <title>Sequence and analysis of chromosome 3 of the plant Arabidopsis thaliana.</title>
        <authorList>
            <person name="Salanoubat M."/>
            <person name="Lemcke K."/>
            <person name="Rieger M."/>
            <person name="Ansorge W."/>
            <person name="Unseld M."/>
            <person name="Fartmann B."/>
            <person name="Valle G."/>
            <person name="Bloecker H."/>
            <person name="Perez-Alonso M."/>
            <person name="Obermaier B."/>
            <person name="Delseny M."/>
            <person name="Boutry M."/>
            <person name="Grivell L.A."/>
            <person name="Mache R."/>
            <person name="Puigdomenech P."/>
            <person name="De Simone V."/>
            <person name="Choisne N."/>
            <person name="Artiguenave F."/>
            <person name="Robert C."/>
            <person name="Brottier P."/>
            <person name="Wincker P."/>
            <person name="Cattolico L."/>
            <person name="Weissenbach J."/>
            <person name="Saurin W."/>
            <person name="Quetier F."/>
            <person name="Schaefer M."/>
            <person name="Mueller-Auer S."/>
            <person name="Gabel C."/>
            <person name="Fuchs M."/>
            <person name="Benes V."/>
            <person name="Wurmbach E."/>
            <person name="Drzonek H."/>
            <person name="Erfle H."/>
            <person name="Jordan N."/>
            <person name="Bangert S."/>
            <person name="Wiedelmann R."/>
            <person name="Kranz H."/>
            <person name="Voss H."/>
            <person name="Holland R."/>
            <person name="Brandt P."/>
            <person name="Nyakatura G."/>
            <person name="Vezzi A."/>
            <person name="D'Angelo M."/>
            <person name="Pallavicini A."/>
            <person name="Toppo S."/>
            <person name="Simionati B."/>
            <person name="Conrad A."/>
            <person name="Hornischer K."/>
            <person name="Kauer G."/>
            <person name="Loehnert T.-H."/>
            <person name="Nordsiek G."/>
            <person name="Reichelt J."/>
            <person name="Scharfe M."/>
            <person name="Schoen O."/>
            <person name="Bargues M."/>
            <person name="Terol J."/>
            <person name="Climent J."/>
            <person name="Navarro P."/>
            <person name="Collado C."/>
            <person name="Perez-Perez A."/>
            <person name="Ottenwaelder B."/>
            <person name="Duchemin D."/>
            <person name="Cooke R."/>
            <person name="Laudie M."/>
            <person name="Berger-Llauro C."/>
            <person name="Purnelle B."/>
            <person name="Masuy D."/>
            <person name="de Haan M."/>
            <person name="Maarse A.C."/>
            <person name="Alcaraz J.-P."/>
            <person name="Cottet A."/>
            <person name="Casacuberta E."/>
            <person name="Monfort A."/>
            <person name="Argiriou A."/>
            <person name="Flores M."/>
            <person name="Liguori R."/>
            <person name="Vitale D."/>
            <person name="Mannhaupt G."/>
            <person name="Haase D."/>
            <person name="Schoof H."/>
            <person name="Rudd S."/>
            <person name="Zaccaria P."/>
            <person name="Mewes H.-W."/>
            <person name="Mayer K.F.X."/>
            <person name="Kaul S."/>
            <person name="Town C.D."/>
            <person name="Koo H.L."/>
            <person name="Tallon L.J."/>
            <person name="Jenkins J."/>
            <person name="Rooney T."/>
            <person name="Rizzo M."/>
            <person name="Walts A."/>
            <person name="Utterback T."/>
            <person name="Fujii C.Y."/>
            <person name="Shea T.P."/>
            <person name="Creasy T.H."/>
            <person name="Haas B."/>
            <person name="Maiti R."/>
            <person name="Wu D."/>
            <person name="Peterson J."/>
            <person name="Van Aken S."/>
            <person name="Pai G."/>
            <person name="Militscher J."/>
            <person name="Sellers P."/>
            <person name="Gill J.E."/>
            <person name="Feldblyum T.V."/>
            <person name="Preuss D."/>
            <person name="Lin X."/>
            <person name="Nierman W.C."/>
            <person name="Salzberg S.L."/>
            <person name="White O."/>
            <person name="Venter J.C."/>
            <person name="Fraser C.M."/>
            <person name="Kaneko T."/>
            <person name="Nakamura Y."/>
            <person name="Sato S."/>
            <person name="Kato T."/>
            <person name="Asamizu E."/>
            <person name="Sasamoto S."/>
            <person name="Kimura T."/>
            <person name="Idesawa K."/>
            <person name="Kawashima K."/>
            <person name="Kishida Y."/>
            <person name="Kiyokawa C."/>
            <person name="Kohara M."/>
            <person name="Matsumoto M."/>
            <person name="Matsuno A."/>
            <person name="Muraki A."/>
            <person name="Nakayama S."/>
            <person name="Nakazaki N."/>
            <person name="Shinpo S."/>
            <person name="Takeuchi C."/>
            <person name="Wada T."/>
            <person name="Watanabe A."/>
            <person name="Yamada M."/>
            <person name="Yasuda M."/>
            <person name="Tabata S."/>
        </authorList>
    </citation>
    <scope>NUCLEOTIDE SEQUENCE [LARGE SCALE GENOMIC DNA]</scope>
    <source>
        <strain>cv. Columbia</strain>
    </source>
</reference>
<reference key="4">
    <citation type="journal article" date="2017" name="Plant J.">
        <title>Araport11: a complete reannotation of the Arabidopsis thaliana reference genome.</title>
        <authorList>
            <person name="Cheng C.Y."/>
            <person name="Krishnakumar V."/>
            <person name="Chan A.P."/>
            <person name="Thibaud-Nissen F."/>
            <person name="Schobel S."/>
            <person name="Town C.D."/>
        </authorList>
    </citation>
    <scope>GENOME REANNOTATION</scope>
    <source>
        <strain>cv. Columbia</strain>
    </source>
</reference>
<reference key="5">
    <citation type="journal article" date="2003" name="Science">
        <title>Empirical analysis of transcriptional activity in the Arabidopsis genome.</title>
        <authorList>
            <person name="Yamada K."/>
            <person name="Lim J."/>
            <person name="Dale J.M."/>
            <person name="Chen H."/>
            <person name="Shinn P."/>
            <person name="Palm C.J."/>
            <person name="Southwick A.M."/>
            <person name="Wu H.C."/>
            <person name="Kim C.J."/>
            <person name="Nguyen M."/>
            <person name="Pham P.K."/>
            <person name="Cheuk R.F."/>
            <person name="Karlin-Newmann G."/>
            <person name="Liu S.X."/>
            <person name="Lam B."/>
            <person name="Sakano H."/>
            <person name="Wu T."/>
            <person name="Yu G."/>
            <person name="Miranda M."/>
            <person name="Quach H.L."/>
            <person name="Tripp M."/>
            <person name="Chang C.H."/>
            <person name="Lee J.M."/>
            <person name="Toriumi M.J."/>
            <person name="Chan M.M."/>
            <person name="Tang C.C."/>
            <person name="Onodera C.S."/>
            <person name="Deng J.M."/>
            <person name="Akiyama K."/>
            <person name="Ansari Y."/>
            <person name="Arakawa T."/>
            <person name="Banh J."/>
            <person name="Banno F."/>
            <person name="Bowser L."/>
            <person name="Brooks S.Y."/>
            <person name="Carninci P."/>
            <person name="Chao Q."/>
            <person name="Choy N."/>
            <person name="Enju A."/>
            <person name="Goldsmith A.D."/>
            <person name="Gurjal M."/>
            <person name="Hansen N.F."/>
            <person name="Hayashizaki Y."/>
            <person name="Johnson-Hopson C."/>
            <person name="Hsuan V.W."/>
            <person name="Iida K."/>
            <person name="Karnes M."/>
            <person name="Khan S."/>
            <person name="Koesema E."/>
            <person name="Ishida J."/>
            <person name="Jiang P.X."/>
            <person name="Jones T."/>
            <person name="Kawai J."/>
            <person name="Kamiya A."/>
            <person name="Meyers C."/>
            <person name="Nakajima M."/>
            <person name="Narusaka M."/>
            <person name="Seki M."/>
            <person name="Sakurai T."/>
            <person name="Satou M."/>
            <person name="Tamse R."/>
            <person name="Vaysberg M."/>
            <person name="Wallender E.K."/>
            <person name="Wong C."/>
            <person name="Yamamura Y."/>
            <person name="Yuan S."/>
            <person name="Shinozaki K."/>
            <person name="Davis R.W."/>
            <person name="Theologis A."/>
            <person name="Ecker J.R."/>
        </authorList>
    </citation>
    <scope>NUCLEOTIDE SEQUENCE [LARGE SCALE MRNA]</scope>
    <source>
        <strain>cv. Columbia</strain>
    </source>
</reference>
<reference key="6">
    <citation type="journal article" date="2000" name="Biochem. J.">
        <title>Pyruvate dehydrogenase kinase from Arabidopsis thaliana: a protein histidine kinase that phosphorylates serine residues.</title>
        <authorList>
            <person name="Thelen J.J."/>
            <person name="Miernyk J.A."/>
            <person name="Randall D.D."/>
        </authorList>
    </citation>
    <scope>FUNCTION</scope>
    <scope>MUTAGENESIS OF HIS-121</scope>
    <scope>PHOSPHORYLATION AT HIS-121</scope>
</reference>
<reference key="7">
    <citation type="journal article" date="2000" name="Biochem. Biophys. Res. Commun.">
        <title>Histidine modifying agents abolish pyruvate dehydrogenase kinase activity.</title>
        <authorList>
            <person name="Mooney B.P."/>
            <person name="David N.R."/>
            <person name="Thelen J.J."/>
            <person name="Miernyk J.A."/>
            <person name="Randall D.D."/>
        </authorList>
    </citation>
    <scope>FUNCTION</scope>
    <scope>CATALYTIC ACTIVITY</scope>
    <scope>ACTIVITY REGULATION</scope>
    <scope>AUTOPHOSPHORYLATION</scope>
</reference>
<reference key="8">
    <citation type="journal article" date="2002" name="Eur. J. Biochem.">
        <title>Histidine mutagenesis of Arabidopsis thaliana pyruvate dehydrogenase kinase.</title>
        <authorList>
            <person name="Tovar-Mendez A."/>
            <person name="Miernyk J.A."/>
            <person name="Randall D.D."/>
        </authorList>
    </citation>
    <scope>MUTAGENESIS OF HIS-121 AND HIS-168</scope>
</reference>
<reference key="9">
    <citation type="journal article" date="2003" name="J. Exp. Bot.">
        <title>Biochemical and physiological studies of Arabidopsis thaliana transgenic lines with repressed expression of the mitochondrial pyruvate dehydrogenase kinase.</title>
        <authorList>
            <person name="Marillia E.-F."/>
            <person name="Micallef B.J."/>
            <person name="Micallef M."/>
            <person name="Weninger A."/>
            <person name="Pedersen K.K."/>
            <person name="Zou J."/>
            <person name="Taylor D.C."/>
        </authorList>
    </citation>
    <scope>FUNCTION</scope>
    <scope>DISRUPTION PHENOTYPE</scope>
    <source>
        <strain>cv. Columbia</strain>
    </source>
</reference>
<reference key="10">
    <citation type="journal article" date="2005" name="Arch. Biochem. Biophys.">
        <title>Analysis of the catalytic mechanism of pyruvate dehydrogenase kinase.</title>
        <authorList>
            <person name="Tovar-Mendez A."/>
            <person name="Hirani T.A."/>
            <person name="Miernyk J.A."/>
            <person name="Randall D.D."/>
        </authorList>
    </citation>
    <scope>BIOPHYSICOCHEMICAL PROPERTIES</scope>
    <scope>SUBUNIT</scope>
    <scope>MUTAGENESIS OF GLU-238 AND LYS-241</scope>
</reference>
<accession>Q9SBJ1</accession>
<accession>O82657</accession>
<accession>Q9C8Z0</accession>
<accession>Q9SQV2</accession>
<gene>
    <name type="primary">PDK</name>
    <name type="synonym">PDHK</name>
    <name type="synonym">YA5</name>
    <name type="ordered locus">At3g06483</name>
    <name type="ORF">F24P17.1</name>
    <name type="ORF">F5E6.19</name>
</gene>
<dbReference type="EC" id="2.7.11.2"/>
<dbReference type="EMBL" id="AF039406">
    <property type="protein sequence ID" value="AAC97601.1"/>
    <property type="molecule type" value="mRNA"/>
</dbReference>
<dbReference type="EMBL" id="AJ007312">
    <property type="protein sequence ID" value="CAA07447.1"/>
    <property type="molecule type" value="mRNA"/>
</dbReference>
<dbReference type="EMBL" id="AC011623">
    <property type="protein sequence ID" value="AAF08568.1"/>
    <property type="status" value="ALT_SEQ"/>
    <property type="molecule type" value="Genomic_DNA"/>
</dbReference>
<dbReference type="EMBL" id="AC020580">
    <property type="protein sequence ID" value="AAG51324.1"/>
    <property type="molecule type" value="Genomic_DNA"/>
</dbReference>
<dbReference type="EMBL" id="CP002686">
    <property type="protein sequence ID" value="AEE74401.1"/>
    <property type="molecule type" value="Genomic_DNA"/>
</dbReference>
<dbReference type="EMBL" id="AY035017">
    <property type="protein sequence ID" value="AAK59522.1"/>
    <property type="molecule type" value="mRNA"/>
</dbReference>
<dbReference type="EMBL" id="AY059083">
    <property type="protein sequence ID" value="AAL15189.1"/>
    <property type="molecule type" value="mRNA"/>
</dbReference>
<dbReference type="PIR" id="T51626">
    <property type="entry name" value="T51626"/>
</dbReference>
<dbReference type="RefSeq" id="NP_187300.3">
    <property type="nucleotide sequence ID" value="NM_111524.4"/>
</dbReference>
<dbReference type="SMR" id="Q9SBJ1"/>
<dbReference type="FunCoup" id="Q9SBJ1">
    <property type="interactions" value="2714"/>
</dbReference>
<dbReference type="STRING" id="3702.Q9SBJ1"/>
<dbReference type="iPTMnet" id="Q9SBJ1"/>
<dbReference type="PaxDb" id="3702-AT3G06483.1"/>
<dbReference type="ProteomicsDB" id="236720"/>
<dbReference type="EnsemblPlants" id="AT3G06483.1">
    <property type="protein sequence ID" value="AT3G06483.1"/>
    <property type="gene ID" value="AT3G06483"/>
</dbReference>
<dbReference type="GeneID" id="819826"/>
<dbReference type="Gramene" id="AT3G06483.1">
    <property type="protein sequence ID" value="AT3G06483.1"/>
    <property type="gene ID" value="AT3G06483"/>
</dbReference>
<dbReference type="KEGG" id="ath:AT3G06483"/>
<dbReference type="Araport" id="AT3G06483"/>
<dbReference type="TAIR" id="AT3G06483">
    <property type="gene designation" value="PDK"/>
</dbReference>
<dbReference type="eggNOG" id="KOG0787">
    <property type="taxonomic scope" value="Eukaryota"/>
</dbReference>
<dbReference type="HOGENOM" id="CLU_023861_5_0_1"/>
<dbReference type="InParanoid" id="Q9SBJ1"/>
<dbReference type="OMA" id="NEMPSIC"/>
<dbReference type="OrthoDB" id="241648at2759"/>
<dbReference type="PhylomeDB" id="Q9SBJ1"/>
<dbReference type="BRENDA" id="2.7.11.2">
    <property type="organism ID" value="399"/>
</dbReference>
<dbReference type="PRO" id="PR:Q9SBJ1"/>
<dbReference type="Proteomes" id="UP000006548">
    <property type="component" value="Chromosome 3"/>
</dbReference>
<dbReference type="ExpressionAtlas" id="Q9SBJ1">
    <property type="expression patterns" value="baseline and differential"/>
</dbReference>
<dbReference type="GO" id="GO:0005829">
    <property type="term" value="C:cytosol"/>
    <property type="evidence" value="ECO:0007005"/>
    <property type="project" value="TAIR"/>
</dbReference>
<dbReference type="GO" id="GO:0005739">
    <property type="term" value="C:mitochondrion"/>
    <property type="evidence" value="ECO:0000303"/>
    <property type="project" value="TAIR"/>
</dbReference>
<dbReference type="GO" id="GO:0005524">
    <property type="term" value="F:ATP binding"/>
    <property type="evidence" value="ECO:0000314"/>
    <property type="project" value="TAIR"/>
</dbReference>
<dbReference type="GO" id="GO:0009927">
    <property type="term" value="F:histidine phosphotransfer kinase activity"/>
    <property type="evidence" value="ECO:0000314"/>
    <property type="project" value="TAIR"/>
</dbReference>
<dbReference type="GO" id="GO:0042803">
    <property type="term" value="F:protein homodimerization activity"/>
    <property type="evidence" value="ECO:0000353"/>
    <property type="project" value="UniProtKB"/>
</dbReference>
<dbReference type="GO" id="GO:0004740">
    <property type="term" value="F:pyruvate dehydrogenase (acetyl-transferring) kinase activity"/>
    <property type="evidence" value="ECO:0007669"/>
    <property type="project" value="UniProtKB-EC"/>
</dbReference>
<dbReference type="GO" id="GO:0046777">
    <property type="term" value="P:protein autophosphorylation"/>
    <property type="evidence" value="ECO:0000314"/>
    <property type="project" value="UniProtKB"/>
</dbReference>
<dbReference type="CDD" id="cd16929">
    <property type="entry name" value="HATPase_PDK-like"/>
    <property type="match status" value="1"/>
</dbReference>
<dbReference type="FunFam" id="3.30.565.10:FF:000065">
    <property type="entry name" value="[Pyruvate dehydrogenase (Acetyl-transferring)] kinase mitochondrial"/>
    <property type="match status" value="1"/>
</dbReference>
<dbReference type="FunFam" id="1.20.140.20:FF:000003">
    <property type="entry name" value="[Pyruvate dehydrogenase (Acetyl-transferring)] kinase, mitochondrial"/>
    <property type="match status" value="1"/>
</dbReference>
<dbReference type="Gene3D" id="1.20.140.20">
    <property type="entry name" value="Alpha-ketoacid/pyruvate dehydrogenase kinase, N-terminal domain"/>
    <property type="match status" value="1"/>
</dbReference>
<dbReference type="Gene3D" id="3.30.565.10">
    <property type="entry name" value="Histidine kinase-like ATPase, C-terminal domain"/>
    <property type="match status" value="1"/>
</dbReference>
<dbReference type="InterPro" id="IPR036784">
    <property type="entry name" value="AK/P_DHK_N_sf"/>
</dbReference>
<dbReference type="InterPro" id="IPR018955">
    <property type="entry name" value="BCDHK/PDK_N"/>
</dbReference>
<dbReference type="InterPro" id="IPR039028">
    <property type="entry name" value="BCKD/PDK"/>
</dbReference>
<dbReference type="InterPro" id="IPR036890">
    <property type="entry name" value="HATPase_C_sf"/>
</dbReference>
<dbReference type="InterPro" id="IPR005467">
    <property type="entry name" value="His_kinase_dom"/>
</dbReference>
<dbReference type="InterPro" id="IPR004358">
    <property type="entry name" value="Sig_transdc_His_kin-like_C"/>
</dbReference>
<dbReference type="PANTHER" id="PTHR11947:SF3">
    <property type="entry name" value="[PYRUVATE DEHYDROGENASE (ACETYL-TRANSFERRING)] KINASE, MITOCHONDRIAL"/>
    <property type="match status" value="1"/>
</dbReference>
<dbReference type="PANTHER" id="PTHR11947">
    <property type="entry name" value="PYRUVATE DEHYDROGENASE KINASE"/>
    <property type="match status" value="1"/>
</dbReference>
<dbReference type="Pfam" id="PF10436">
    <property type="entry name" value="BCDHK_Adom3"/>
    <property type="match status" value="1"/>
</dbReference>
<dbReference type="Pfam" id="PF02518">
    <property type="entry name" value="HATPase_c"/>
    <property type="match status" value="1"/>
</dbReference>
<dbReference type="PRINTS" id="PR00344">
    <property type="entry name" value="BCTRLSENSOR"/>
</dbReference>
<dbReference type="SMART" id="SM00387">
    <property type="entry name" value="HATPase_c"/>
    <property type="match status" value="1"/>
</dbReference>
<dbReference type="SUPFAM" id="SSF69012">
    <property type="entry name" value="alpha-ketoacid dehydrogenase kinase, N-terminal domain"/>
    <property type="match status" value="1"/>
</dbReference>
<dbReference type="SUPFAM" id="SSF55874">
    <property type="entry name" value="ATPase domain of HSP90 chaperone/DNA topoisomerase II/histidine kinase"/>
    <property type="match status" value="1"/>
</dbReference>
<dbReference type="PROSITE" id="PS50109">
    <property type="entry name" value="HIS_KIN"/>
    <property type="match status" value="1"/>
</dbReference>
<name>PDK_ARATH</name>
<proteinExistence type="evidence at protein level"/>
<comment type="function">
    <text evidence="3 4 5 7">Serine protein kinase that inhibits the mitochondrial pyruvate dehydrogenase (PDH) complex (mtPDC) by phosphorylation of the E1 alpha subunit on Ser residues, thus contributing to the regulation of glucose metabolism.</text>
</comment>
<comment type="catalytic activity">
    <reaction evidence="3 4">
        <text>L-seryl-[pyruvate dehydrogenase E1 alpha subunit] + ATP = O-phospho-L-seryl-[pyruvate dehydrogenase E1 alpha subunit] + ADP + H(+)</text>
        <dbReference type="Rhea" id="RHEA:23052"/>
        <dbReference type="Rhea" id="RHEA-COMP:13689"/>
        <dbReference type="Rhea" id="RHEA-COMP:13690"/>
        <dbReference type="ChEBI" id="CHEBI:15378"/>
        <dbReference type="ChEBI" id="CHEBI:29999"/>
        <dbReference type="ChEBI" id="CHEBI:30616"/>
        <dbReference type="ChEBI" id="CHEBI:83421"/>
        <dbReference type="ChEBI" id="CHEBI:456216"/>
        <dbReference type="EC" id="2.7.11.2"/>
    </reaction>
</comment>
<comment type="activity regulation">
    <text evidence="3">Treatment with the His-directed reagents diethyl pyrocarbonate (DEPC) and dichloro-(2,2*:6*,2(-terpyridine))-platinum(II) dihydrate inhibits kinase activity, including autophosphorylation.</text>
</comment>
<comment type="biophysicochemical properties">
    <kinetics>
        <KM evidence="8">50 uM for ATP (at pH 7.5)</KM>
        <text>kcat is 0.55 sec(-1) with ATP as substrate (at pH 7.5, in PubMed:15629119).</text>
    </kinetics>
    <phDependence>
        <text evidence="8">Optimum pH is 7-7.5.</text>
    </phDependence>
</comment>
<comment type="subunit">
    <text evidence="8">Homodimer.</text>
</comment>
<comment type="subcellular location">
    <subcellularLocation>
        <location evidence="1">Mitochondrion</location>
    </subcellularLocation>
</comment>
<comment type="tissue specificity">
    <text evidence="4">Expressed constitutively and ubiquitously.</text>
</comment>
<comment type="PTM">
    <text evidence="5">Autophosphorylated on Ser residues near N-terminus.</text>
</comment>
<comment type="disruption phenotype">
    <text evidence="4 7">Elevation of the mitochondrial pyruvate dehydrogenase (PDH) complex (mtPDC) activity. Altered vegetative growth with reduced accumulation of vegetative tissues, early flower development and shorter generation time. Increased seed oil content and seed weight at maturity.</text>
</comment>
<comment type="similarity">
    <text evidence="9">Belongs to the PDK/BCKDK protein kinase family.</text>
</comment>
<comment type="sequence caution" evidence="9">
    <conflict type="erroneous gene model prediction">
        <sequence resource="EMBL-CDS" id="AAF08568"/>
    </conflict>
</comment>
<feature type="chain" id="PRO_0000419693" description="[Pyruvate dehydrogenase (acetyl-transferring)] kinase, mitochondrial">
    <location>
        <begin position="1"/>
        <end position="366"/>
    </location>
</feature>
<feature type="domain" description="Histidine kinase" evidence="2">
    <location>
        <begin position="122"/>
        <end position="359"/>
    </location>
</feature>
<feature type="binding site" evidence="1">
    <location>
        <begin position="238"/>
        <end position="245"/>
    </location>
    <ligand>
        <name>ATP</name>
        <dbReference type="ChEBI" id="CHEBI:30616"/>
    </ligand>
</feature>
<feature type="binding site" evidence="1">
    <location>
        <position position="278"/>
    </location>
    <ligand>
        <name>ATP</name>
        <dbReference type="ChEBI" id="CHEBI:30616"/>
    </ligand>
</feature>
<feature type="binding site" evidence="1">
    <location>
        <begin position="297"/>
        <end position="298"/>
    </location>
    <ligand>
        <name>ATP</name>
        <dbReference type="ChEBI" id="CHEBI:30616"/>
    </ligand>
</feature>
<feature type="binding site" evidence="1">
    <location>
        <begin position="320"/>
        <end position="325"/>
    </location>
    <ligand>
        <name>ATP</name>
        <dbReference type="ChEBI" id="CHEBI:30616"/>
    </ligand>
</feature>
<feature type="modified residue" description="Phosphohistidine; by autocatalysis" evidence="2 5">
    <location>
        <position position="121"/>
    </location>
</feature>
<feature type="mutagenesis site" description="Reduced autophosphorylation and slower kinase activity toward the mitochondrial pyruvate dehydrogenase complex (PDC)." evidence="5 6">
    <original>H</original>
    <variation>A</variation>
    <variation>Q</variation>
    <location>
        <position position="121"/>
    </location>
</feature>
<feature type="mutagenesis site" description="Reduced autophosphorylation and slower kinase activity toward the mitochondrial pyruvate dehydrogenase complex (PDC); when associated with H-121." evidence="6">
    <original>H</original>
    <variation>Q</variation>
    <location>
        <position position="168"/>
    </location>
</feature>
<feature type="mutagenesis site" description="Reduced activity." evidence="8">
    <original>E</original>
    <variation>A</variation>
    <variation>H</variation>
    <variation>Q</variation>
    <location>
        <position position="238"/>
    </location>
</feature>
<feature type="mutagenesis site" description="Reduced activity." evidence="8">
    <original>K</original>
    <variation>A</variation>
    <location>
        <position position="241"/>
    </location>
</feature>
<feature type="sequence conflict" description="In Ref. 2; CAA07447." evidence="9" ref="2">
    <original>H</original>
    <variation>D</variation>
    <location>
        <position position="233"/>
    </location>
</feature>
<feature type="sequence conflict" description="In Ref. 2; CAA07447." evidence="9" ref="2">
    <original>VTMA</original>
    <variation>GTMG</variation>
    <location>
        <begin position="316"/>
        <end position="319"/>
    </location>
</feature>